<sequence>MWSLTASEGESTTAHFFLGAGDEGLGTRGIGMRPEESDSELLEDEEDEVPPEPQIIVGICAMTKKSKSKPMTQILERLCRFDYLTVVILGEDVILNEPVENWPSCHCLISFHSKGFPLDKAVAYSKLRNPFLINDLAMQYYIQDRREVYRILQEEGIDLPRYAVLNRDPARPEECNLIEGEDQVEVNGAVFPKPFVEKPVSAEDHNVYIYYPSSAGGGSQRLFRKIGSRSSVYSPESSVRKTGSYIYEEFMPTDGTDVKVYTVGPDYAHAEARKSPALDGKVERDSEGKEIRYPVMLTAMEKLVARKVCVAFKQTVCGFDLLRANGHSFVCDVNGFSFVKNSMKYYDDCAKILGNTIMRELAPQFQIPWSIPTEAEDIPIVPTTSGTMMELRCVIAIIRHGDRTPKQKMKMEVKHPRFFALFEKHGGYKTGKLKLKRPEQLQEVLDITRLLLAELEKEPGGEIEEKTGKLEQLKSVLEMYGHFSGINRKVQLTYYPHGVKASNEGQDPQRETLAPSLLLVLKWGGELTPAGRVQAEELGRAFRCMYPGGQGDYAGFPGCGLLRLHSTFRHDLKIYASDEGRVQMTAAAFAKGLLALEGELTPILVQMVKSANMNGLLDSDGDSLSSCQHRVKARLHHILQQDAPFGPEDYDQLAPTRSTSLLNSMTIIQNPVKVCDQVFALIENLTHQIRERMQDPRSVDLQLYHSETLELMLQRWSKLERDFRQKSGRYDISKIPDIYDCVKYDVQHNGSLGLQGTAELLRLSKALADVVIPQEYGISREEKLEIAVGFCLPLLRKILLDLQRTHEDESVNKLHPLCYLRYSRGVLSPGRHVRTRLYFTSESHVHSLLSVFRYGGLLDETQDAQWQRALDYLSAISELNYMTQIVIMLYEDNTQDPLSEERFHVELHFSPGVKGVEEEGSAPAGCGFRPASSENEEMKTNQGSMENLCPGKASDEPDRALQTSPQPPEGPGLPRRSPLIRNRKAGSMEVLSETSSSRPGGYRLFSSSRPPTEMKQSGLGSQCTGLFSTTVLGGSSSAPNLQDYARSHGKKLPPASLKHRDELLFVPAVKRFSVSFAKHPTNGFEGCSMVPTIYPLETLHNALSLRQVSEFLSRVCQRHTDAQAQASAALFDSMHSSQASDNPFSPPRTLHSPPLQLQQRSEKPPWYSSGPSSTVSSAGPSSPTTVDGNSQFGFSDQPSLNSHVAEEHQGLGLLQETPGSGAQELSIEGEQELFEPNQSPQVPPMETSQPYEEVSQPCQEVPDISQPCQDISEALSQPCQKVPDISQQCQENHDNGNHTCQEVPHISQPCQKSSQLCQKVSEEVCQLCLENSEEVSQPCQGVSVEVGKLVHKFHVGVGSLVQETLVEVGSPAEEIPEEVIQPYQEFSVEVGRLAQETSAINLLSQGIPEIDKPSQEFPEEIDLQAQEVPEEIN</sequence>
<reference key="1">
    <citation type="journal article" date="2003" name="Eur. J. Hum. Genet.">
        <title>CATSPER2, a human autosomal nonsyndromic male infertility gene.</title>
        <authorList>
            <person name="Avidan N."/>
            <person name="Tamary H."/>
            <person name="Dgany O."/>
            <person name="Cattan D."/>
            <person name="Pariente A."/>
            <person name="Thulliez M."/>
            <person name="Borot N."/>
            <person name="Moati L."/>
            <person name="Barthelme A."/>
            <person name="Shalmon L."/>
            <person name="Krasnov T."/>
            <person name="Ben-Asher E."/>
            <person name="Olender T."/>
            <person name="Khen M."/>
            <person name="Yaniv I."/>
            <person name="Zaizov R."/>
            <person name="Shalev H."/>
            <person name="Delaunay J."/>
            <person name="Fellous M."/>
            <person name="Lancet D."/>
            <person name="Beckmann J.S."/>
        </authorList>
    </citation>
    <scope>NUCLEOTIDE SEQUENCE [MRNA] (ISOFORMS 2; 3 AND 5)</scope>
    <source>
        <tissue>Bone marrow</tissue>
        <tissue>Testis</tissue>
        <tissue>Trachea</tissue>
    </source>
</reference>
<reference key="2">
    <citation type="journal article" date="1997" name="DNA Res.">
        <title>Prediction of the coding sequences of unidentified human genes. VII. The complete sequences of 100 new cDNA clones from brain which can code for large proteins in vitro.</title>
        <authorList>
            <person name="Nagase T."/>
            <person name="Ishikawa K."/>
            <person name="Nakajima D."/>
            <person name="Ohira M."/>
            <person name="Seki N."/>
            <person name="Miyajima N."/>
            <person name="Tanaka A."/>
            <person name="Kotani H."/>
            <person name="Nomura N."/>
            <person name="Ohara O."/>
        </authorList>
    </citation>
    <scope>NUCLEOTIDE SEQUENCE [LARGE SCALE MRNA] (ISOFORM 7)</scope>
    <source>
        <tissue>Brain</tissue>
    </source>
</reference>
<reference key="3">
    <citation type="submission" date="1997-07" db="EMBL/GenBank/DDBJ databases">
        <authorList>
            <person name="Ohara O."/>
            <person name="Nagase T."/>
            <person name="Kikuno R."/>
            <person name="Nomura N."/>
        </authorList>
    </citation>
    <scope>SEQUENCE REVISION</scope>
</reference>
<reference key="4">
    <citation type="journal article" date="2007" name="BMC Genomics">
        <title>The full-ORF clone resource of the German cDNA consortium.</title>
        <authorList>
            <person name="Bechtel S."/>
            <person name="Rosenfelder H."/>
            <person name="Duda A."/>
            <person name="Schmidt C.P."/>
            <person name="Ernst U."/>
            <person name="Wellenreuther R."/>
            <person name="Mehrle A."/>
            <person name="Schuster C."/>
            <person name="Bahr A."/>
            <person name="Bloecker H."/>
            <person name="Heubner D."/>
            <person name="Hoerlein A."/>
            <person name="Michel G."/>
            <person name="Wedler H."/>
            <person name="Koehrer K."/>
            <person name="Ottenwaelder B."/>
            <person name="Poustka A."/>
            <person name="Wiemann S."/>
            <person name="Schupp I."/>
        </authorList>
    </citation>
    <scope>NUCLEOTIDE SEQUENCE [LARGE SCALE MRNA] (ISOFORMS 3 AND 4)</scope>
    <source>
        <tissue>Endometrial adenocarcinoma</tissue>
    </source>
</reference>
<reference key="5">
    <citation type="journal article" date="2004" name="Genome Res.">
        <title>The status, quality, and expansion of the NIH full-length cDNA project: the Mammalian Gene Collection (MGC).</title>
        <authorList>
            <consortium name="The MGC Project Team"/>
        </authorList>
    </citation>
    <scope>NUCLEOTIDE SEQUENCE [LARGE SCALE MRNA] (ISOFORMS 1 AND 6)</scope>
    <source>
        <tissue>Eye</tissue>
        <tissue>Uterus</tissue>
    </source>
</reference>
<reference key="6">
    <citation type="journal article" date="2006" name="Nat. Biotechnol.">
        <title>A probability-based approach for high-throughput protein phosphorylation analysis and site localization.</title>
        <authorList>
            <person name="Beausoleil S.A."/>
            <person name="Villen J."/>
            <person name="Gerber S.A."/>
            <person name="Rush J."/>
            <person name="Gygi S.P."/>
        </authorList>
    </citation>
    <scope>IDENTIFICATION BY MASS SPECTROMETRY [LARGE SCALE ANALYSIS]</scope>
    <source>
        <tissue>Cervix carcinoma</tissue>
    </source>
</reference>
<reference key="7">
    <citation type="journal article" date="2007" name="J. Biol. Chem.">
        <title>Cloning and characterization of two human VIP1-like inositol hexakisphosphate and diphosphoinositol pentakisphosphate kinases.</title>
        <authorList>
            <person name="Fridy P.C."/>
            <person name="Otto J.C."/>
            <person name="Dollins D.E."/>
            <person name="York J.D."/>
        </authorList>
    </citation>
    <scope>FUNCTION</scope>
    <scope>CATALYTIC ACTIVITY</scope>
    <scope>BIOPHYSICOCHEMICAL PROPERTIES</scope>
    <scope>SUBCELLULAR LOCATION</scope>
    <scope>TISSUE SPECIFICITY</scope>
</reference>
<reference key="8">
    <citation type="journal article" date="2007" name="J. Biol. Chem.">
        <title>Purification, sequencing, and molecular identification of a mammalian PP-InsP5 kinase that is activated when cells are exposed to hyperosmotic stress.</title>
        <authorList>
            <person name="Choi J.H."/>
            <person name="Williams J."/>
            <person name="Cho J."/>
            <person name="Falck J.R."/>
            <person name="Shears S.B."/>
        </authorList>
    </citation>
    <scope>FUNCTION</scope>
    <scope>CATALYTIC ACTIVITY</scope>
    <scope>BIOPHYSICOCHEMICAL PROPERTIES</scope>
    <scope>SUBCELLULAR LOCATION</scope>
</reference>
<reference key="9">
    <citation type="journal article" date="2008" name="J. Proteome Res.">
        <title>Combining protein-based IMAC, peptide-based IMAC, and MudPIT for efficient phosphoproteomic analysis.</title>
        <authorList>
            <person name="Cantin G.T."/>
            <person name="Yi W."/>
            <person name="Lu B."/>
            <person name="Park S.K."/>
            <person name="Xu T."/>
            <person name="Lee J.-D."/>
            <person name="Yates J.R. III"/>
        </authorList>
    </citation>
    <scope>PHOSPHORYLATION [LARGE SCALE ANALYSIS] AT SER-1152</scope>
    <scope>IDENTIFICATION BY MASS SPECTROMETRY [LARGE SCALE ANALYSIS]</scope>
    <source>
        <tissue>Cervix carcinoma</tissue>
    </source>
</reference>
<reference key="10">
    <citation type="journal article" date="2008" name="Proc. Natl. Acad. Sci. U.S.A.">
        <title>A quantitative atlas of mitotic phosphorylation.</title>
        <authorList>
            <person name="Dephoure N."/>
            <person name="Zhou C."/>
            <person name="Villen J."/>
            <person name="Beausoleil S.A."/>
            <person name="Bakalarski C.E."/>
            <person name="Elledge S.J."/>
            <person name="Gygi S.P."/>
        </authorList>
    </citation>
    <scope>IDENTIFICATION BY MASS SPECTROMETRY [LARGE SCALE ANALYSIS]</scope>
    <source>
        <tissue>Cervix carcinoma</tissue>
    </source>
</reference>
<reference key="11">
    <citation type="journal article" date="2009" name="Anal. Chem.">
        <title>Lys-N and trypsin cover complementary parts of the phosphoproteome in a refined SCX-based approach.</title>
        <authorList>
            <person name="Gauci S."/>
            <person name="Helbig A.O."/>
            <person name="Slijper M."/>
            <person name="Krijgsveld J."/>
            <person name="Heck A.J."/>
            <person name="Mohammed S."/>
        </authorList>
    </citation>
    <scope>IDENTIFICATION BY MASS SPECTROMETRY [LARGE SCALE ANALYSIS]</scope>
</reference>
<reference key="12">
    <citation type="journal article" date="2009" name="J. Biol. Chem.">
        <title>Structural analysis and detection of biological inositol pyrophosphates reveal that the family of VIP/diphosphoinositol pentakisphosphate kinases are 1/3-kinases.</title>
        <authorList>
            <person name="Lin H."/>
            <person name="Fridy P.C."/>
            <person name="Ribeiro A.A."/>
            <person name="Choi J.H."/>
            <person name="Barma D.K."/>
            <person name="Vogel G."/>
            <person name="Falck J.R."/>
            <person name="Shears S.B."/>
            <person name="York J.D."/>
            <person name="Mayr G.W."/>
        </authorList>
    </citation>
    <scope>FUNCTION</scope>
    <scope>CATALYTIC ACTIVITY</scope>
</reference>
<reference key="13">
    <citation type="journal article" date="2011" name="Biochem. J.">
        <title>Receptor-dependent compartmentalization of PPIP5K1, a kinase with a cryptic polyphosphoinositide binding domain.</title>
        <authorList>
            <person name="Gokhale N.A."/>
            <person name="Zaremba A."/>
            <person name="Shears S.B."/>
        </authorList>
    </citation>
    <scope>BIOPHYSICOCHEMICAL PROPERTIES</scope>
    <scope>CATALYTIC ACTIVITY</scope>
    <scope>SUBCELLULAR LOCATION</scope>
    <scope>POLYPHOSPHOINOSITIDE-BINDING DOMAIN</scope>
    <scope>MUTAGENESIS OF ARG-399 AND ARG-417</scope>
</reference>
<reference key="14">
    <citation type="journal article" date="2013" name="J. Proteome Res.">
        <title>Toward a comprehensive characterization of a human cancer cell phosphoproteome.</title>
        <authorList>
            <person name="Zhou H."/>
            <person name="Di Palma S."/>
            <person name="Preisinger C."/>
            <person name="Peng M."/>
            <person name="Polat A.N."/>
            <person name="Heck A.J."/>
            <person name="Mohammed S."/>
        </authorList>
    </citation>
    <scope>PHOSPHORYLATION [LARGE SCALE ANALYSIS] AT SER-944; SER-987; SER-1037; SER-1073 AND SER-1152</scope>
    <scope>IDENTIFICATION BY MASS SPECTROMETRY [LARGE SCALE ANALYSIS]</scope>
    <source>
        <tissue>Cervix carcinoma</tissue>
        <tissue>Erythroleukemia</tissue>
    </source>
</reference>
<reference key="15">
    <citation type="journal article" date="2014" name="J. Proteomics">
        <title>An enzyme assisted RP-RPLC approach for in-depth analysis of human liver phosphoproteome.</title>
        <authorList>
            <person name="Bian Y."/>
            <person name="Song C."/>
            <person name="Cheng K."/>
            <person name="Dong M."/>
            <person name="Wang F."/>
            <person name="Huang J."/>
            <person name="Sun D."/>
            <person name="Wang L."/>
            <person name="Ye M."/>
            <person name="Zou H."/>
        </authorList>
    </citation>
    <scope>PHOSPHORYLATION [LARGE SCALE ANALYSIS] AT SER-944</scope>
    <scope>IDENTIFICATION BY MASS SPECTROMETRY [LARGE SCALE ANALYSIS]</scope>
    <source>
        <tissue>Liver</tissue>
    </source>
</reference>
<protein>
    <recommendedName>
        <fullName evidence="12">Inositol hexakisphosphate and diphosphoinositol-pentakisphosphate kinase 1</fullName>
        <ecNumber evidence="4 5 6">2.7.4.24</ecNumber>
    </recommendedName>
    <alternativeName>
        <fullName>Diphosphoinositol pentakisphosphate kinase 1</fullName>
    </alternativeName>
    <alternativeName>
        <fullName>Histidine acid phosphatase domain-containing protein 2A</fullName>
    </alternativeName>
    <alternativeName>
        <fullName>IP6 kinase</fullName>
    </alternativeName>
    <alternativeName>
        <fullName>Inositol pyrophosphate synthase 1</fullName>
    </alternativeName>
    <alternativeName>
        <fullName>InsP6 and PP-IP5 kinase 1</fullName>
    </alternativeName>
    <alternativeName>
        <fullName>VIP1 homolog</fullName>
        <shortName>hsVIP1</shortName>
    </alternativeName>
</protein>
<comment type="function">
    <text evidence="4 5">Bifunctional inositol kinase that acts in concert with the IP6K kinases IP6K1, IP6K2 and IP6K3 to synthesize the diphosphate group-containing inositol pyrophosphates diphosphoinositol pentakisphosphate, PP-InsP5, and bis-diphosphoinositol tetrakisphosphate, (PP)2-InsP4. PP-InsP5 and (PP)2-InsP4, also respectively called InsP7 and InsP8, regulate a variety of cellular processes, including apoptosis, vesicle trafficking, cytoskeletal dynamics, exocytosis, insulin signaling and neutrophil activation. Phosphorylates inositol hexakisphosphate (InsP6) at position 1 to produce PP-InsP5 which is in turn phosphorylated by IP6Ks to produce (PP)2-InsP4. Alternatively, phosphorylates PP-InsP5 at position 1, produced by IP6Ks from InsP6, to produce (PP)2-InsP4. Activated when cells are exposed to hyperosmotic stress.</text>
</comment>
<comment type="catalytic activity">
    <reaction evidence="4 5 6 7">
        <text>1D-myo-inositol hexakisphosphate + ATP = 1-diphospho-1D-myo-inositol 2,3,4,5,6-pentakisphosphate + ADP</text>
        <dbReference type="Rhea" id="RHEA:37459"/>
        <dbReference type="ChEBI" id="CHEBI:30616"/>
        <dbReference type="ChEBI" id="CHEBI:58130"/>
        <dbReference type="ChEBI" id="CHEBI:74946"/>
        <dbReference type="ChEBI" id="CHEBI:456216"/>
        <dbReference type="EC" id="2.7.4.24"/>
    </reaction>
    <physiologicalReaction direction="left-to-right" evidence="6 13 14 15">
        <dbReference type="Rhea" id="RHEA:37460"/>
    </physiologicalReaction>
</comment>
<comment type="catalytic activity">
    <reaction evidence="4 5 6 7">
        <text>5-diphospho-1D-myo-inositol 1,2,3,4,6-pentakisphosphate + ATP + H(+) = 1,5-bis(diphospho)-1D-myo-inositol 2,3,4,6-tetrakisphosphate + ADP</text>
        <dbReference type="Rhea" id="RHEA:10276"/>
        <dbReference type="ChEBI" id="CHEBI:15378"/>
        <dbReference type="ChEBI" id="CHEBI:30616"/>
        <dbReference type="ChEBI" id="CHEBI:58628"/>
        <dbReference type="ChEBI" id="CHEBI:77983"/>
        <dbReference type="ChEBI" id="CHEBI:456216"/>
        <dbReference type="EC" id="2.7.4.24"/>
    </reaction>
    <physiologicalReaction direction="left-to-right" evidence="6 13 14 15">
        <dbReference type="Rhea" id="RHEA:10277"/>
    </physiologicalReaction>
</comment>
<comment type="biophysicochemical properties">
    <kinetics>
        <KM evidence="4 5 7">0.12 uM for InsP6</KM>
        <KM evidence="4 5 7">0.1 uM for InsP7</KM>
        <Vmax evidence="4 5 7">0.03 nmol/min/mg enzyme with InsP6 as substrate</Vmax>
        <Vmax evidence="4 5 7">0.13 nmol/min/mg enzyme with InsP7 as substrate</Vmax>
        <text>The catalytic efficiency is 80 folds higher for 5-PP-InsP5 (InsP7) compared to InsP6.</text>
    </kinetics>
</comment>
<comment type="subcellular location">
    <subcellularLocation>
        <location evidence="4 5 7">Cytoplasm</location>
        <location evidence="4 5 7">Cytosol</location>
    </subcellularLocation>
    <subcellularLocation>
        <location evidence="7">Cell membrane</location>
    </subcellularLocation>
    <text evidence="7">Relocalizes to the plasma membrane upon activation of the PtdIns 3-kinase pathway.</text>
</comment>
<comment type="alternative products">
    <event type="alternative splicing"/>
    <isoform>
        <id>Q6PFW1-1</id>
        <name>1</name>
        <sequence type="displayed"/>
    </isoform>
    <isoform>
        <id>Q6PFW1-2</id>
        <name>2</name>
        <sequence type="described" ref="VSP_030618 VSP_030622"/>
    </isoform>
    <isoform>
        <id>Q6PFW1-3</id>
        <name>3</name>
        <sequence type="described" ref="VSP_030618 VSP_030621"/>
    </isoform>
    <isoform>
        <id>Q6PFW1-4</id>
        <name>4</name>
        <sequence type="described" ref="VSP_030615 VSP_030618 VSP_030621"/>
    </isoform>
    <isoform>
        <id>Q6PFW1-5</id>
        <name>5</name>
        <sequence type="described" ref="VSP_030616 VSP_030619 VSP_030623"/>
    </isoform>
    <isoform>
        <id>Q6PFW1-6</id>
        <name>6</name>
        <sequence type="described" ref="VSP_030617"/>
    </isoform>
    <isoform>
        <id>Q6PFW1-7</id>
        <name>7</name>
        <sequence type="described" ref="VSP_030618 VSP_030620 VSP_030624"/>
    </isoform>
</comment>
<comment type="tissue specificity">
    <text evidence="4">Widely expressed, with a higher expression in skeletal muscle, heart and brain.</text>
</comment>
<comment type="domain">
    <text evidence="7">The C-terminal acid phosphatase-like domain binds PtdIns(3,4,5)P3 and InsP6. Despite its similarity with the phosphatase domain of histidine acid phosphatases, it has no phosphatase activity.</text>
</comment>
<comment type="similarity">
    <text evidence="12">Belongs to the histidine acid phosphatase family. VIP1 subfamily.</text>
</comment>
<comment type="sequence caution" evidence="12">
    <conflict type="erroneous initiation">
        <sequence resource="EMBL-CDS" id="BAA20831"/>
    </conflict>
    <text>Extended N-terminus.</text>
</comment>
<keyword id="KW-0025">Alternative splicing</keyword>
<keyword id="KW-0067">ATP-binding</keyword>
<keyword id="KW-1003">Cell membrane</keyword>
<keyword id="KW-0963">Cytoplasm</keyword>
<keyword id="KW-0418">Kinase</keyword>
<keyword id="KW-0472">Membrane</keyword>
<keyword id="KW-0547">Nucleotide-binding</keyword>
<keyword id="KW-0597">Phosphoprotein</keyword>
<keyword id="KW-1267">Proteomics identification</keyword>
<keyword id="KW-1185">Reference proteome</keyword>
<keyword id="KW-0808">Transferase</keyword>
<organism>
    <name type="scientific">Homo sapiens</name>
    <name type="common">Human</name>
    <dbReference type="NCBI Taxonomy" id="9606"/>
    <lineage>
        <taxon>Eukaryota</taxon>
        <taxon>Metazoa</taxon>
        <taxon>Chordata</taxon>
        <taxon>Craniata</taxon>
        <taxon>Vertebrata</taxon>
        <taxon>Euteleostomi</taxon>
        <taxon>Mammalia</taxon>
        <taxon>Eutheria</taxon>
        <taxon>Euarchontoglires</taxon>
        <taxon>Primates</taxon>
        <taxon>Haplorrhini</taxon>
        <taxon>Catarrhini</taxon>
        <taxon>Hominidae</taxon>
        <taxon>Homo</taxon>
    </lineage>
</organism>
<accession>Q6PFW1</accession>
<accession>O15082</accession>
<accession>Q5HYF8</accession>
<accession>Q7Z3A7</accession>
<accession>Q86TE7</accession>
<accession>Q86UV3</accession>
<accession>Q86UV4</accession>
<accession>Q86XW8</accession>
<accession>Q8IZN0</accession>
<name>VIP1_HUMAN</name>
<feature type="chain" id="PRO_0000315688" description="Inositol hexakisphosphate and diphosphoinositol-pentakisphosphate kinase 1">
    <location>
        <begin position="1"/>
        <end position="1433"/>
    </location>
</feature>
<feature type="region of interest" description="Polyphosphoinositide-binding domain" evidence="7">
    <location>
        <begin position="382"/>
        <end position="453"/>
    </location>
</feature>
<feature type="region of interest" description="Disordered" evidence="3">
    <location>
        <begin position="915"/>
        <end position="1020"/>
    </location>
</feature>
<feature type="region of interest" description="Disordered" evidence="3">
    <location>
        <begin position="1134"/>
        <end position="1199"/>
    </location>
</feature>
<feature type="region of interest" description="Disordered" evidence="3">
    <location>
        <begin position="1235"/>
        <end position="1257"/>
    </location>
</feature>
<feature type="compositionally biased region" description="Polar residues" evidence="3">
    <location>
        <begin position="1005"/>
        <end position="1020"/>
    </location>
</feature>
<feature type="compositionally biased region" description="Polar residues" evidence="3">
    <location>
        <begin position="1134"/>
        <end position="1143"/>
    </location>
</feature>
<feature type="compositionally biased region" description="Low complexity" evidence="3">
    <location>
        <begin position="1168"/>
        <end position="1186"/>
    </location>
</feature>
<feature type="compositionally biased region" description="Polar residues" evidence="3">
    <location>
        <begin position="1187"/>
        <end position="1199"/>
    </location>
</feature>
<feature type="compositionally biased region" description="Polar residues" evidence="3">
    <location>
        <begin position="1236"/>
        <end position="1250"/>
    </location>
</feature>
<feature type="binding site" evidence="2">
    <location>
        <begin position="64"/>
        <end position="65"/>
    </location>
    <ligand>
        <name>substrate</name>
    </ligand>
</feature>
<feature type="binding site" evidence="2">
    <location>
        <position position="145"/>
    </location>
    <ligand>
        <name>ATP</name>
        <dbReference type="ChEBI" id="CHEBI:30616"/>
    </ligand>
</feature>
<feature type="binding site" evidence="2">
    <location>
        <position position="198"/>
    </location>
    <ligand>
        <name>ATP</name>
        <dbReference type="ChEBI" id="CHEBI:30616"/>
    </ligand>
</feature>
<feature type="binding site" evidence="2">
    <location>
        <position position="205"/>
    </location>
    <ligand>
        <name>ATP</name>
        <dbReference type="ChEBI" id="CHEBI:30616"/>
    </ligand>
</feature>
<feature type="binding site" evidence="2">
    <location>
        <begin position="224"/>
        <end position="225"/>
    </location>
    <ligand>
        <name>substrate</name>
    </ligand>
</feature>
<feature type="binding site" evidence="2">
    <location>
        <position position="224"/>
    </location>
    <ligand>
        <name>ATP</name>
        <dbReference type="ChEBI" id="CHEBI:30616"/>
    </ligand>
</feature>
<feature type="binding site" evidence="2">
    <location>
        <begin position="248"/>
        <end position="251"/>
    </location>
    <ligand>
        <name>ATP</name>
        <dbReference type="ChEBI" id="CHEBI:30616"/>
    </ligand>
</feature>
<feature type="binding site" evidence="2">
    <location>
        <begin position="257"/>
        <end position="259"/>
    </location>
    <ligand>
        <name>ATP</name>
        <dbReference type="ChEBI" id="CHEBI:30616"/>
    </ligand>
</feature>
<feature type="binding site" evidence="2">
    <location>
        <position position="259"/>
    </location>
    <ligand>
        <name>substrate</name>
    </ligand>
</feature>
<feature type="binding site" evidence="2">
    <location>
        <position position="273"/>
    </location>
    <ligand>
        <name>substrate</name>
    </ligand>
</feature>
<feature type="binding site" evidence="2">
    <location>
        <position position="275"/>
    </location>
    <ligand>
        <name>ATP</name>
        <dbReference type="ChEBI" id="CHEBI:30616"/>
    </ligand>
</feature>
<feature type="binding site" evidence="2">
    <location>
        <position position="320"/>
    </location>
    <ligand>
        <name>ATP</name>
        <dbReference type="ChEBI" id="CHEBI:30616"/>
    </ligand>
</feature>
<feature type="binding site" evidence="2">
    <location>
        <begin position="332"/>
        <end position="334"/>
    </location>
    <ligand>
        <name>ATP</name>
        <dbReference type="ChEBI" id="CHEBI:30616"/>
    </ligand>
</feature>
<feature type="binding site" evidence="2">
    <location>
        <begin position="337"/>
        <end position="340"/>
    </location>
    <ligand>
        <name>substrate</name>
    </ligand>
</feature>
<feature type="modified residue" description="Phosphoserine" evidence="18 19">
    <location>
        <position position="944"/>
    </location>
</feature>
<feature type="modified residue" description="Phosphoserine" evidence="18">
    <location>
        <position position="987"/>
    </location>
</feature>
<feature type="modified residue" description="Phosphoserine" evidence="18">
    <location>
        <position position="1037"/>
    </location>
</feature>
<feature type="modified residue" description="Phosphoserine" evidence="18">
    <location>
        <position position="1073"/>
    </location>
</feature>
<feature type="modified residue" description="Phosphoserine" evidence="1">
    <location>
        <position position="1145"/>
    </location>
</feature>
<feature type="modified residue" description="Phosphoserine" evidence="17 18">
    <location>
        <position position="1152"/>
    </location>
</feature>
<feature type="splice variant" id="VSP_030615" description="In isoform 4." evidence="10">
    <location>
        <position position="653"/>
    </location>
</feature>
<feature type="splice variant" id="VSP_030616" description="In isoform 5." evidence="8">
    <location>
        <begin position="810"/>
        <end position="821"/>
    </location>
</feature>
<feature type="splice variant" id="VSP_030617" description="In isoform 6." evidence="9">
    <location>
        <begin position="818"/>
        <end position="1433"/>
    </location>
</feature>
<feature type="splice variant" id="VSP_030618" description="In isoform 2, isoform 3, isoform 4 and isoform 7." evidence="8 10 11">
    <location>
        <begin position="818"/>
        <end position="821"/>
    </location>
</feature>
<feature type="splice variant" id="VSP_030619" description="In isoform 5." evidence="8">
    <location>
        <begin position="865"/>
        <end position="957"/>
    </location>
</feature>
<feature type="splice variant" id="VSP_030620" description="In isoform 7." evidence="11">
    <location>
        <begin position="1020"/>
        <end position="1082"/>
    </location>
</feature>
<feature type="splice variant" id="VSP_030621" description="In isoform 3 and isoform 4." evidence="8 10">
    <location>
        <begin position="1062"/>
        <end position="1082"/>
    </location>
</feature>
<feature type="splice variant" id="VSP_030622" description="In isoform 2." evidence="8">
    <original>N</original>
    <variation>NG</variation>
    <location>
        <position position="1082"/>
    </location>
</feature>
<feature type="splice variant" id="VSP_030623" description="In isoform 5." evidence="8">
    <location>
        <begin position="1107"/>
        <end position="1240"/>
    </location>
</feature>
<feature type="splice variant" id="VSP_030624" description="In isoform 7." evidence="11">
    <original>Y</original>
    <variation>LETRFCHVGQAGLELLTSSDLPASASQSAGITGVSHRTQPD</variation>
    <location>
        <position position="1167"/>
    </location>
</feature>
<feature type="mutagenesis site" description="Decreases 8-fold the affinity for PtdIns(3,4,5)P3." evidence="7">
    <original>R</original>
    <variation>A</variation>
    <location>
        <position position="399"/>
    </location>
</feature>
<feature type="mutagenesis site" description="Decreases 16-fold the affinity for PtdIns(3,4,5)P3." evidence="7">
    <original>R</original>
    <variation>A</variation>
    <location>
        <position position="417"/>
    </location>
</feature>
<feature type="sequence conflict" description="In Ref. 4; CAD97968." evidence="12" ref="4">
    <original>D</original>
    <variation>G</variation>
    <location>
        <position position="44"/>
    </location>
</feature>
<feature type="sequence conflict" description="In Ref. 4; CAD97968." evidence="12" ref="4">
    <original>V</original>
    <variation>M</variation>
    <location>
        <position position="304"/>
    </location>
</feature>
<feature type="sequence conflict" description="In Ref. 4; CAD97968." evidence="12" ref="4">
    <original>E</original>
    <variation>V</variation>
    <location>
        <position position="374"/>
    </location>
</feature>
<feature type="sequence conflict" description="In Ref. 1; AAP30843/AAP30845/AAN40768." evidence="12" ref="1">
    <original>E</original>
    <variation>Q</variation>
    <location>
        <position position="423"/>
    </location>
</feature>
<feature type="sequence conflict" description="In Ref. 4; CAD97968." evidence="12" ref="4">
    <original>L</original>
    <variation>P</variation>
    <location>
        <position position="473"/>
    </location>
</feature>
<feature type="sequence conflict" description="In Ref. 1; AAP30845/AAN40768." evidence="12" ref="1">
    <original>F</original>
    <variation>S</variation>
    <location>
        <position position="483"/>
    </location>
</feature>
<feature type="sequence conflict" description="In Ref. 4; CAD97968." evidence="12" ref="4">
    <original>V</original>
    <variation>E</variation>
    <location>
        <position position="490"/>
    </location>
</feature>
<feature type="sequence conflict" description="In Ref. 4; CAD97968." evidence="12" ref="4">
    <original>G</original>
    <variation>V</variation>
    <location>
        <position position="548"/>
    </location>
</feature>
<feature type="sequence conflict" description="In Ref. 1; AAP30845/AAN40768." evidence="12" ref="1">
    <original>I</original>
    <variation>L</variation>
    <location>
        <position position="738"/>
    </location>
</feature>
<feature type="sequence conflict" description="In Ref. 1; AAP30845/AAN40768." evidence="12" ref="1">
    <original>V</original>
    <variation>A</variation>
    <location>
        <position position="788"/>
    </location>
</feature>
<feature type="sequence conflict" description="In Ref. 4; CAI46011." evidence="12" ref="4">
    <original>E</original>
    <variation>G</variation>
    <location>
        <position position="936"/>
    </location>
</feature>
<feature type="sequence conflict" description="In Ref. 1; AAP30845/AAN40768." evidence="12" ref="1">
    <original>A</original>
    <variation>V</variation>
    <location>
        <position position="985"/>
    </location>
</feature>
<feature type="sequence conflict" description="In Ref. 1; AAP30843." evidence="12" ref="1">
    <original>G</original>
    <variation>A</variation>
    <location>
        <position position="1020"/>
    </location>
</feature>
<feature type="sequence conflict" description="In Ref. 1; AAP30845/AAN40768." evidence="12" ref="1">
    <original>L</original>
    <variation>P</variation>
    <location>
        <position position="1041"/>
    </location>
</feature>
<feature type="sequence conflict" description="In Ref. 1; AAP30842." evidence="12" ref="1">
    <original>V</original>
    <variation>L</variation>
    <location>
        <position position="1066"/>
    </location>
</feature>
<feature type="sequence conflict" description="In Ref. 4; CAI46011." evidence="12" ref="4">
    <original>A</original>
    <variation>T</variation>
    <location>
        <position position="1126"/>
    </location>
</feature>
<feature type="sequence conflict" description="In Ref. 4; CAI46011." evidence="12" ref="4">
    <original>M</original>
    <variation>V</variation>
    <location>
        <position position="1134"/>
    </location>
</feature>
<feature type="sequence conflict" description="In Ref. 4; CAI46011." evidence="12" ref="4">
    <original>P</original>
    <variation>R</variation>
    <location>
        <position position="1198"/>
    </location>
</feature>
<feature type="sequence conflict" description="In Ref. 1; AAP30845/AAN40768." evidence="12" ref="1">
    <original>H</original>
    <variation>M</variation>
    <location>
        <position position="1293"/>
    </location>
</feature>
<feature type="sequence conflict" description="In Ref. 1; AAP30845/AAN40768." evidence="12" ref="1">
    <original>D</original>
    <variation>T</variation>
    <location>
        <position position="1294"/>
    </location>
</feature>
<evidence type="ECO:0000250" key="1">
    <source>
        <dbReference type="UniProtKB" id="A2ARP1"/>
    </source>
</evidence>
<evidence type="ECO:0000250" key="2">
    <source>
        <dbReference type="UniProtKB" id="O43314"/>
    </source>
</evidence>
<evidence type="ECO:0000256" key="3">
    <source>
        <dbReference type="SAM" id="MobiDB-lite"/>
    </source>
</evidence>
<evidence type="ECO:0000269" key="4">
    <source>
    </source>
</evidence>
<evidence type="ECO:0000269" key="5">
    <source>
    </source>
</evidence>
<evidence type="ECO:0000269" key="6">
    <source>
    </source>
</evidence>
<evidence type="ECO:0000269" key="7">
    <source>
    </source>
</evidence>
<evidence type="ECO:0000303" key="8">
    <source>
    </source>
</evidence>
<evidence type="ECO:0000303" key="9">
    <source>
    </source>
</evidence>
<evidence type="ECO:0000303" key="10">
    <source>
    </source>
</evidence>
<evidence type="ECO:0000303" key="11">
    <source>
    </source>
</evidence>
<evidence type="ECO:0000305" key="12"/>
<evidence type="ECO:0000305" key="13">
    <source>
    </source>
</evidence>
<evidence type="ECO:0000305" key="14">
    <source>
    </source>
</evidence>
<evidence type="ECO:0000305" key="15">
    <source>
    </source>
</evidence>
<evidence type="ECO:0000312" key="16">
    <source>
        <dbReference type="HGNC" id="HGNC:29023"/>
    </source>
</evidence>
<evidence type="ECO:0007744" key="17">
    <source>
    </source>
</evidence>
<evidence type="ECO:0007744" key="18">
    <source>
    </source>
</evidence>
<evidence type="ECO:0007744" key="19">
    <source>
    </source>
</evidence>
<gene>
    <name evidence="16" type="primary">PPIP5K1</name>
    <name type="synonym">HISPPD2A</name>
    <name type="synonym">IP6K</name>
    <name type="synonym">IPS1</name>
    <name type="synonym">KIAA0377</name>
    <name type="synonym">VIP1</name>
</gene>
<proteinExistence type="evidence at protein level"/>
<dbReference type="EC" id="2.7.4.24" evidence="4 5 6"/>
<dbReference type="EMBL" id="AF502586">
    <property type="protein sequence ID" value="AAP30842.1"/>
    <property type="molecule type" value="mRNA"/>
</dbReference>
<dbReference type="EMBL" id="AF502587">
    <property type="protein sequence ID" value="AAP30843.1"/>
    <property type="molecule type" value="mRNA"/>
</dbReference>
<dbReference type="EMBL" id="AF502588">
    <property type="protein sequence ID" value="AAP30844.1"/>
    <property type="molecule type" value="mRNA"/>
</dbReference>
<dbReference type="EMBL" id="AF502589">
    <property type="protein sequence ID" value="AAP30845.1"/>
    <property type="molecule type" value="mRNA"/>
</dbReference>
<dbReference type="EMBL" id="AF543190">
    <property type="protein sequence ID" value="AAN40768.1"/>
    <property type="molecule type" value="mRNA"/>
</dbReference>
<dbReference type="EMBL" id="AB002375">
    <property type="protein sequence ID" value="BAA20831.2"/>
    <property type="status" value="ALT_INIT"/>
    <property type="molecule type" value="mRNA"/>
</dbReference>
<dbReference type="EMBL" id="BX538022">
    <property type="protein sequence ID" value="CAD97968.1"/>
    <property type="molecule type" value="mRNA"/>
</dbReference>
<dbReference type="EMBL" id="BX647814">
    <property type="protein sequence ID" value="CAI46011.1"/>
    <property type="molecule type" value="mRNA"/>
</dbReference>
<dbReference type="EMBL" id="BC050263">
    <property type="protein sequence ID" value="AAH50263.1"/>
    <property type="molecule type" value="mRNA"/>
</dbReference>
<dbReference type="EMBL" id="BC057395">
    <property type="protein sequence ID" value="AAH57395.1"/>
    <property type="molecule type" value="mRNA"/>
</dbReference>
<dbReference type="CCDS" id="CCDS32215.1">
    <molecule id="Q6PFW1-3"/>
</dbReference>
<dbReference type="CCDS" id="CCDS45252.1">
    <molecule id="Q6PFW1-1"/>
</dbReference>
<dbReference type="CCDS" id="CCDS53937.1">
    <molecule id="Q6PFW1-7"/>
</dbReference>
<dbReference type="RefSeq" id="NP_001124330.1">
    <molecule id="Q6PFW1-1"/>
    <property type="nucleotide sequence ID" value="NM_001130858.4"/>
</dbReference>
<dbReference type="RefSeq" id="NP_001124331.1">
    <molecule id="Q6PFW1-3"/>
    <property type="nucleotide sequence ID" value="NM_001130859.3"/>
</dbReference>
<dbReference type="RefSeq" id="NP_001177143.1">
    <molecule id="Q6PFW1-7"/>
    <property type="nucleotide sequence ID" value="NM_001190214.2"/>
</dbReference>
<dbReference type="RefSeq" id="NP_001341319.1">
    <molecule id="Q6PFW1-3"/>
    <property type="nucleotide sequence ID" value="NM_001354390.2"/>
</dbReference>
<dbReference type="RefSeq" id="NP_001341320.1">
    <molecule id="Q6PFW1-3"/>
    <property type="nucleotide sequence ID" value="NM_001354391.2"/>
</dbReference>
<dbReference type="RefSeq" id="NP_001341321.1">
    <molecule id="Q6PFW1-3"/>
    <property type="nucleotide sequence ID" value="NM_001354392.2"/>
</dbReference>
<dbReference type="RefSeq" id="NP_055474.3">
    <molecule id="Q6PFW1-3"/>
    <property type="nucleotide sequence ID" value="NM_014659.5"/>
</dbReference>
<dbReference type="RefSeq" id="XP_005254861.1">
    <molecule id="Q6PFW1-3"/>
    <property type="nucleotide sequence ID" value="XM_005254804.1"/>
</dbReference>
<dbReference type="RefSeq" id="XP_016878237.1">
    <property type="nucleotide sequence ID" value="XM_017022748.1"/>
</dbReference>
<dbReference type="RefSeq" id="XP_016878238.1">
    <property type="nucleotide sequence ID" value="XM_017022749.1"/>
</dbReference>
<dbReference type="RefSeq" id="XP_016878239.1">
    <property type="nucleotide sequence ID" value="XM_017022750.1"/>
</dbReference>
<dbReference type="RefSeq" id="XP_016878240.1">
    <property type="nucleotide sequence ID" value="XM_017022751.1"/>
</dbReference>
<dbReference type="RefSeq" id="XP_016878248.1">
    <property type="nucleotide sequence ID" value="XM_017022759.1"/>
</dbReference>
<dbReference type="RefSeq" id="XP_047289341.1">
    <molecule id="Q6PFW1-3"/>
    <property type="nucleotide sequence ID" value="XM_047433385.1"/>
</dbReference>
<dbReference type="RefSeq" id="XP_054235255.1">
    <molecule id="Q6PFW1-3"/>
    <property type="nucleotide sequence ID" value="XM_054379280.1"/>
</dbReference>
<dbReference type="RefSeq" id="XP_054235256.1">
    <molecule id="Q6PFW1-3"/>
    <property type="nucleotide sequence ID" value="XM_054379281.1"/>
</dbReference>
<dbReference type="SMR" id="Q6PFW1"/>
<dbReference type="BioGRID" id="115031">
    <property type="interactions" value="70"/>
</dbReference>
<dbReference type="FunCoup" id="Q6PFW1">
    <property type="interactions" value="1001"/>
</dbReference>
<dbReference type="IntAct" id="Q6PFW1">
    <property type="interactions" value="34"/>
</dbReference>
<dbReference type="STRING" id="9606.ENSP00000400887"/>
<dbReference type="ChEMBL" id="CHEMBL5046"/>
<dbReference type="DEPOD" id="PPIP5K1"/>
<dbReference type="GlyGen" id="Q6PFW1">
    <property type="glycosylation" value="1 site, 1 O-linked glycan (1 site)"/>
</dbReference>
<dbReference type="iPTMnet" id="Q6PFW1"/>
<dbReference type="PhosphoSitePlus" id="Q6PFW1"/>
<dbReference type="BioMuta" id="PPIP5K1"/>
<dbReference type="DMDM" id="74758334"/>
<dbReference type="jPOST" id="Q6PFW1"/>
<dbReference type="MassIVE" id="Q6PFW1"/>
<dbReference type="PaxDb" id="9606-ENSP00000400887"/>
<dbReference type="PeptideAtlas" id="Q6PFW1"/>
<dbReference type="ProteomicsDB" id="67105">
    <molecule id="Q6PFW1-1"/>
</dbReference>
<dbReference type="ProteomicsDB" id="67106">
    <molecule id="Q6PFW1-2"/>
</dbReference>
<dbReference type="ProteomicsDB" id="67107">
    <molecule id="Q6PFW1-3"/>
</dbReference>
<dbReference type="ProteomicsDB" id="67108">
    <molecule id="Q6PFW1-4"/>
</dbReference>
<dbReference type="ProteomicsDB" id="67109">
    <molecule id="Q6PFW1-5"/>
</dbReference>
<dbReference type="ProteomicsDB" id="67110">
    <molecule id="Q6PFW1-6"/>
</dbReference>
<dbReference type="ProteomicsDB" id="67111">
    <molecule id="Q6PFW1-7"/>
</dbReference>
<dbReference type="Pumba" id="Q6PFW1"/>
<dbReference type="Antibodypedia" id="35179">
    <property type="antibodies" value="48 antibodies from 14 providers"/>
</dbReference>
<dbReference type="DNASU" id="9677"/>
<dbReference type="Ensembl" id="ENST00000334933.8">
    <molecule id="Q6PFW1-3"/>
    <property type="protein sequence ID" value="ENSP00000334779.4"/>
    <property type="gene ID" value="ENSG00000168781.24"/>
</dbReference>
<dbReference type="Ensembl" id="ENST00000360135.8">
    <molecule id="Q6PFW1-7"/>
    <property type="protein sequence ID" value="ENSP00000353253.4"/>
    <property type="gene ID" value="ENSG00000168781.24"/>
</dbReference>
<dbReference type="Ensembl" id="ENST00000360301.8">
    <molecule id="Q6PFW1-3"/>
    <property type="protein sequence ID" value="ENSP00000353446.4"/>
    <property type="gene ID" value="ENSG00000168781.24"/>
</dbReference>
<dbReference type="Ensembl" id="ENST00000396923.7">
    <molecule id="Q6PFW1-1"/>
    <property type="protein sequence ID" value="ENSP00000380129.2"/>
    <property type="gene ID" value="ENSG00000168781.24"/>
</dbReference>
<dbReference type="GeneID" id="9677"/>
<dbReference type="KEGG" id="hsa:9677"/>
<dbReference type="UCSC" id="uc001zrw.3">
    <molecule id="Q6PFW1-1"/>
    <property type="organism name" value="human"/>
</dbReference>
<dbReference type="AGR" id="HGNC:29023"/>
<dbReference type="CTD" id="9677"/>
<dbReference type="DisGeNET" id="9677"/>
<dbReference type="GeneCards" id="PPIP5K1"/>
<dbReference type="HGNC" id="HGNC:29023">
    <property type="gene designation" value="PPIP5K1"/>
</dbReference>
<dbReference type="HPA" id="ENSG00000168781">
    <property type="expression patterns" value="Tissue enhanced (brain)"/>
</dbReference>
<dbReference type="MIM" id="610979">
    <property type="type" value="gene"/>
</dbReference>
<dbReference type="neXtProt" id="NX_Q6PFW1"/>
<dbReference type="OpenTargets" id="ENSG00000168781"/>
<dbReference type="PharmGKB" id="PA165479401"/>
<dbReference type="VEuPathDB" id="HostDB:ENSG00000168781"/>
<dbReference type="eggNOG" id="KOG1057">
    <property type="taxonomic scope" value="Eukaryota"/>
</dbReference>
<dbReference type="GeneTree" id="ENSGT00390000009048"/>
<dbReference type="HOGENOM" id="CLU_000914_0_0_1"/>
<dbReference type="InParanoid" id="Q6PFW1"/>
<dbReference type="OMA" id="AWPRCDA"/>
<dbReference type="OrthoDB" id="18042at2759"/>
<dbReference type="PAN-GO" id="Q6PFW1">
    <property type="GO annotations" value="6 GO annotations based on evolutionary models"/>
</dbReference>
<dbReference type="PhylomeDB" id="Q6PFW1"/>
<dbReference type="TreeFam" id="TF313594"/>
<dbReference type="BioCyc" id="MetaCyc:HS09822-MONOMER"/>
<dbReference type="BRENDA" id="2.7.4.21">
    <property type="organism ID" value="2681"/>
</dbReference>
<dbReference type="BRENDA" id="2.7.4.24">
    <property type="organism ID" value="2681"/>
</dbReference>
<dbReference type="BRENDA" id="3.6.1.B18">
    <property type="organism ID" value="2681"/>
</dbReference>
<dbReference type="PathwayCommons" id="Q6PFW1"/>
<dbReference type="Reactome" id="R-HSA-1855167">
    <property type="pathway name" value="Synthesis of pyrophosphates in the cytosol"/>
</dbReference>
<dbReference type="SABIO-RK" id="Q6PFW1"/>
<dbReference type="SignaLink" id="Q6PFW1"/>
<dbReference type="BioGRID-ORCS" id="9677">
    <property type="hits" value="9 hits in 1151 CRISPR screens"/>
</dbReference>
<dbReference type="CD-CODE" id="DEE660B4">
    <property type="entry name" value="Stress granule"/>
</dbReference>
<dbReference type="ChiTaRS" id="PPIP5K1">
    <property type="organism name" value="human"/>
</dbReference>
<dbReference type="GenomeRNAi" id="9677"/>
<dbReference type="Pharos" id="Q6PFW1">
    <property type="development level" value="Tbio"/>
</dbReference>
<dbReference type="PRO" id="PR:Q6PFW1"/>
<dbReference type="Proteomes" id="UP000005640">
    <property type="component" value="Chromosome 15"/>
</dbReference>
<dbReference type="RNAct" id="Q6PFW1">
    <property type="molecule type" value="protein"/>
</dbReference>
<dbReference type="Bgee" id="ENSG00000168781">
    <property type="expression patterns" value="Expressed in right hemisphere of cerebellum and 190 other cell types or tissues"/>
</dbReference>
<dbReference type="ExpressionAtlas" id="Q6PFW1">
    <property type="expression patterns" value="baseline and differential"/>
</dbReference>
<dbReference type="GO" id="GO:0005829">
    <property type="term" value="C:cytosol"/>
    <property type="evidence" value="ECO:0000314"/>
    <property type="project" value="HPA"/>
</dbReference>
<dbReference type="GO" id="GO:0005886">
    <property type="term" value="C:plasma membrane"/>
    <property type="evidence" value="ECO:0000314"/>
    <property type="project" value="HPA"/>
</dbReference>
<dbReference type="GO" id="GO:0033857">
    <property type="term" value="F:5-diphosphoinositol pentakisphosphate 1-kinase activity"/>
    <property type="evidence" value="ECO:0000314"/>
    <property type="project" value="UniProtKB"/>
</dbReference>
<dbReference type="GO" id="GO:0005524">
    <property type="term" value="F:ATP binding"/>
    <property type="evidence" value="ECO:0000250"/>
    <property type="project" value="UniProtKB"/>
</dbReference>
<dbReference type="GO" id="GO:0000829">
    <property type="term" value="F:diphosphoinositol pentakisphosphate kinase activity"/>
    <property type="evidence" value="ECO:0000304"/>
    <property type="project" value="Reactome"/>
</dbReference>
<dbReference type="GO" id="GO:0052723">
    <property type="term" value="F:inositol hexakisphosphate 1-kinase activity"/>
    <property type="evidence" value="ECO:0007669"/>
    <property type="project" value="RHEA"/>
</dbReference>
<dbReference type="GO" id="GO:0000832">
    <property type="term" value="F:inositol hexakisphosphate 5-kinase activity"/>
    <property type="evidence" value="ECO:0000314"/>
    <property type="project" value="UniProtKB"/>
</dbReference>
<dbReference type="GO" id="GO:0000828">
    <property type="term" value="F:inositol hexakisphosphate kinase activity"/>
    <property type="evidence" value="ECO:0000314"/>
    <property type="project" value="MGI"/>
</dbReference>
<dbReference type="GO" id="GO:0000827">
    <property type="term" value="F:inositol-1,3,4,5,6-pentakisphosphate kinase activity"/>
    <property type="evidence" value="ECO:0000314"/>
    <property type="project" value="UniProtKB"/>
</dbReference>
<dbReference type="GO" id="GO:0006020">
    <property type="term" value="P:inositol metabolic process"/>
    <property type="evidence" value="ECO:0000314"/>
    <property type="project" value="UniProtKB"/>
</dbReference>
<dbReference type="GO" id="GO:0032958">
    <property type="term" value="P:inositol phosphate biosynthetic process"/>
    <property type="evidence" value="ECO:0000318"/>
    <property type="project" value="GO_Central"/>
</dbReference>
<dbReference type="GO" id="GO:0043647">
    <property type="term" value="P:inositol phosphate metabolic process"/>
    <property type="evidence" value="ECO:0000304"/>
    <property type="project" value="Reactome"/>
</dbReference>
<dbReference type="CDD" id="cd07061">
    <property type="entry name" value="HP_HAP_like"/>
    <property type="match status" value="1"/>
</dbReference>
<dbReference type="FunFam" id="3.30.470.20:FF:000003">
    <property type="entry name" value="Inositol hexakisphosphate and diphosphoinositol-pentakisphosphate kinase"/>
    <property type="match status" value="1"/>
</dbReference>
<dbReference type="FunFam" id="3.40.50.11950:FF:000001">
    <property type="entry name" value="Inositol hexakisphosphate and diphosphoinositol-pentakisphosphate kinase"/>
    <property type="match status" value="1"/>
</dbReference>
<dbReference type="FunFam" id="3.40.50.11950:FF:000003">
    <property type="entry name" value="Inositol hexakisphosphate and diphosphoinositol-pentakisphosphate kinase"/>
    <property type="match status" value="1"/>
</dbReference>
<dbReference type="Gene3D" id="3.40.50.11950">
    <property type="match status" value="1"/>
</dbReference>
<dbReference type="Gene3D" id="3.30.470.20">
    <property type="entry name" value="ATP-grasp fold, B domain"/>
    <property type="match status" value="1"/>
</dbReference>
<dbReference type="Gene3D" id="3.40.50.1240">
    <property type="entry name" value="Phosphoglycerate mutase-like"/>
    <property type="match status" value="1"/>
</dbReference>
<dbReference type="InterPro" id="IPR033379">
    <property type="entry name" value="Acid_Pase_AS"/>
</dbReference>
<dbReference type="InterPro" id="IPR000560">
    <property type="entry name" value="His_Pase_clade-2"/>
</dbReference>
<dbReference type="InterPro" id="IPR037446">
    <property type="entry name" value="His_Pase_VIP1"/>
</dbReference>
<dbReference type="InterPro" id="IPR029033">
    <property type="entry name" value="His_PPase_superfam"/>
</dbReference>
<dbReference type="InterPro" id="IPR040557">
    <property type="entry name" value="VIP1_N"/>
</dbReference>
<dbReference type="PANTHER" id="PTHR12750">
    <property type="entry name" value="DIPHOSPHOINOSITOL PENTAKISPHOSPHATE KINASE"/>
    <property type="match status" value="1"/>
</dbReference>
<dbReference type="PANTHER" id="PTHR12750:SF11">
    <property type="entry name" value="INOSITOL HEXAKISPHOSPHATE AND DIPHOSPHOINOSITOL-PENTAKISPHOSPHATE KINASE 1"/>
    <property type="match status" value="1"/>
</dbReference>
<dbReference type="Pfam" id="PF00328">
    <property type="entry name" value="His_Phos_2"/>
    <property type="match status" value="1"/>
</dbReference>
<dbReference type="Pfam" id="PF18086">
    <property type="entry name" value="PPIP5K2_N"/>
    <property type="match status" value="1"/>
</dbReference>
<dbReference type="SUPFAM" id="SSF56059">
    <property type="entry name" value="Glutathione synthetase ATP-binding domain-like"/>
    <property type="match status" value="1"/>
</dbReference>
<dbReference type="SUPFAM" id="SSF53254">
    <property type="entry name" value="Phosphoglycerate mutase-like"/>
    <property type="match status" value="1"/>
</dbReference>
<dbReference type="PROSITE" id="PS00616">
    <property type="entry name" value="HIS_ACID_PHOSPHAT_1"/>
    <property type="match status" value="1"/>
</dbReference>